<reference key="1">
    <citation type="journal article" date="2003" name="Nucleic Acids Res.">
        <title>The complete genome sequence and analysis of Corynebacterium diphtheriae NCTC13129.</title>
        <authorList>
            <person name="Cerdeno-Tarraga A.-M."/>
            <person name="Efstratiou A."/>
            <person name="Dover L.G."/>
            <person name="Holden M.T.G."/>
            <person name="Pallen M.J."/>
            <person name="Bentley S.D."/>
            <person name="Besra G.S."/>
            <person name="Churcher C.M."/>
            <person name="James K.D."/>
            <person name="De Zoysa A."/>
            <person name="Chillingworth T."/>
            <person name="Cronin A."/>
            <person name="Dowd L."/>
            <person name="Feltwell T."/>
            <person name="Hamlin N."/>
            <person name="Holroyd S."/>
            <person name="Jagels K."/>
            <person name="Moule S."/>
            <person name="Quail M.A."/>
            <person name="Rabbinowitsch E."/>
            <person name="Rutherford K.M."/>
            <person name="Thomson N.R."/>
            <person name="Unwin L."/>
            <person name="Whitehead S."/>
            <person name="Barrell B.G."/>
            <person name="Parkhill J."/>
        </authorList>
    </citation>
    <scope>NUCLEOTIDE SEQUENCE [LARGE SCALE GENOMIC DNA]</scope>
    <source>
        <strain>ATCC 700971 / NCTC 13129 / Biotype gravis</strain>
    </source>
</reference>
<name>DNAA_CORDI</name>
<sequence length="552" mass="63030">MWNETWNEITNELIQLSREPESEIPRITAEQRAYLKLVRPAAFVEGIAVLRVPHSRAKETIETHLGQAITSVLSRRMGRPFTVAVTVDPTLDVIQDLPHDVPEQHIVQHHVPEHPHYSPVSQGYPPHYAPEQSEYNTEYSDEYPSGWATYHVQTPQPSQSSQSAQQQPAQRMPDRRRYAEQQQVPQRSEEPVMGQRRAREKPAHDPDRNGSLNPRYTFDTYVVSDSNKLPWSAAWAVAEKPARAYNPLFIWGDSGLGKTHLMHAIGNYAQELDPKLKVKYVSSEEFTNDYINSVRDDRQEAFKRRYRDLDILMVDDIQFLQGKEGTQEEFFHTFNALQQADKQIVLSSDRPPKQLTTLEDRLRTRFQSGLIADIYPPDLETRIAILLNKASAEGITADRDVLELIASRFNASIRELEGAFIRVSAYASLNEAPINMATAQEALRDMMPEQADIEITAGMIMSVTAEYFHIDVDTLKGSGKSRSVAHPRQLAMYLCRELTDLSLPKIGEHFGGKDHTTVMYAYRKIGKEITEKRDTYDEIQQLTQQIKSSDRA</sequence>
<dbReference type="EMBL" id="BX248354">
    <property type="protein sequence ID" value="CAE48512.1"/>
    <property type="molecule type" value="Genomic_DNA"/>
</dbReference>
<dbReference type="SMR" id="Q6NKL7"/>
<dbReference type="STRING" id="257309.DIP0001"/>
<dbReference type="KEGG" id="cdi:DIP0001"/>
<dbReference type="HOGENOM" id="CLU_026910_2_0_11"/>
<dbReference type="Proteomes" id="UP000002198">
    <property type="component" value="Chromosome"/>
</dbReference>
<dbReference type="GO" id="GO:0005737">
    <property type="term" value="C:cytoplasm"/>
    <property type="evidence" value="ECO:0007669"/>
    <property type="project" value="UniProtKB-SubCell"/>
</dbReference>
<dbReference type="GO" id="GO:0005886">
    <property type="term" value="C:plasma membrane"/>
    <property type="evidence" value="ECO:0007669"/>
    <property type="project" value="TreeGrafter"/>
</dbReference>
<dbReference type="GO" id="GO:0005524">
    <property type="term" value="F:ATP binding"/>
    <property type="evidence" value="ECO:0007669"/>
    <property type="project" value="UniProtKB-UniRule"/>
</dbReference>
<dbReference type="GO" id="GO:0016887">
    <property type="term" value="F:ATP hydrolysis activity"/>
    <property type="evidence" value="ECO:0007669"/>
    <property type="project" value="InterPro"/>
</dbReference>
<dbReference type="GO" id="GO:0003688">
    <property type="term" value="F:DNA replication origin binding"/>
    <property type="evidence" value="ECO:0007669"/>
    <property type="project" value="UniProtKB-UniRule"/>
</dbReference>
<dbReference type="GO" id="GO:0008289">
    <property type="term" value="F:lipid binding"/>
    <property type="evidence" value="ECO:0007669"/>
    <property type="project" value="UniProtKB-KW"/>
</dbReference>
<dbReference type="GO" id="GO:0006270">
    <property type="term" value="P:DNA replication initiation"/>
    <property type="evidence" value="ECO:0007669"/>
    <property type="project" value="UniProtKB-UniRule"/>
</dbReference>
<dbReference type="GO" id="GO:0006275">
    <property type="term" value="P:regulation of DNA replication"/>
    <property type="evidence" value="ECO:0007669"/>
    <property type="project" value="UniProtKB-UniRule"/>
</dbReference>
<dbReference type="CDD" id="cd00009">
    <property type="entry name" value="AAA"/>
    <property type="match status" value="1"/>
</dbReference>
<dbReference type="CDD" id="cd06571">
    <property type="entry name" value="Bac_DnaA_C"/>
    <property type="match status" value="1"/>
</dbReference>
<dbReference type="FunFam" id="1.10.1750.10:FF:000002">
    <property type="entry name" value="Chromosomal replication initiator protein DnaA"/>
    <property type="match status" value="1"/>
</dbReference>
<dbReference type="FunFam" id="3.40.50.300:FF:000150">
    <property type="entry name" value="Chromosomal replication initiator protein DnaA"/>
    <property type="match status" value="1"/>
</dbReference>
<dbReference type="Gene3D" id="1.10.1750.10">
    <property type="match status" value="1"/>
</dbReference>
<dbReference type="Gene3D" id="1.10.8.60">
    <property type="match status" value="1"/>
</dbReference>
<dbReference type="Gene3D" id="3.40.50.300">
    <property type="entry name" value="P-loop containing nucleotide triphosphate hydrolases"/>
    <property type="match status" value="1"/>
</dbReference>
<dbReference type="HAMAP" id="MF_00377">
    <property type="entry name" value="DnaA_bact"/>
    <property type="match status" value="1"/>
</dbReference>
<dbReference type="InterPro" id="IPR003593">
    <property type="entry name" value="AAA+_ATPase"/>
</dbReference>
<dbReference type="InterPro" id="IPR001957">
    <property type="entry name" value="Chromosome_initiator_DnaA"/>
</dbReference>
<dbReference type="InterPro" id="IPR020591">
    <property type="entry name" value="Chromosome_initiator_DnaA-like"/>
</dbReference>
<dbReference type="InterPro" id="IPR018312">
    <property type="entry name" value="Chromosome_initiator_DnaA_CS"/>
</dbReference>
<dbReference type="InterPro" id="IPR013159">
    <property type="entry name" value="DnaA_C"/>
</dbReference>
<dbReference type="InterPro" id="IPR013317">
    <property type="entry name" value="DnaA_dom"/>
</dbReference>
<dbReference type="InterPro" id="IPR027417">
    <property type="entry name" value="P-loop_NTPase"/>
</dbReference>
<dbReference type="InterPro" id="IPR010921">
    <property type="entry name" value="Trp_repressor/repl_initiator"/>
</dbReference>
<dbReference type="NCBIfam" id="TIGR00362">
    <property type="entry name" value="DnaA"/>
    <property type="match status" value="1"/>
</dbReference>
<dbReference type="NCBIfam" id="NF010686">
    <property type="entry name" value="PRK14086.1"/>
    <property type="match status" value="1"/>
</dbReference>
<dbReference type="PANTHER" id="PTHR30050">
    <property type="entry name" value="CHROMOSOMAL REPLICATION INITIATOR PROTEIN DNAA"/>
    <property type="match status" value="1"/>
</dbReference>
<dbReference type="PANTHER" id="PTHR30050:SF2">
    <property type="entry name" value="CHROMOSOMAL REPLICATION INITIATOR PROTEIN DNAA"/>
    <property type="match status" value="1"/>
</dbReference>
<dbReference type="Pfam" id="PF00308">
    <property type="entry name" value="Bac_DnaA"/>
    <property type="match status" value="1"/>
</dbReference>
<dbReference type="Pfam" id="PF08299">
    <property type="entry name" value="Bac_DnaA_C"/>
    <property type="match status" value="1"/>
</dbReference>
<dbReference type="PRINTS" id="PR00051">
    <property type="entry name" value="DNAA"/>
</dbReference>
<dbReference type="SMART" id="SM00382">
    <property type="entry name" value="AAA"/>
    <property type="match status" value="1"/>
</dbReference>
<dbReference type="SMART" id="SM00760">
    <property type="entry name" value="Bac_DnaA_C"/>
    <property type="match status" value="1"/>
</dbReference>
<dbReference type="SUPFAM" id="SSF52540">
    <property type="entry name" value="P-loop containing nucleoside triphosphate hydrolases"/>
    <property type="match status" value="1"/>
</dbReference>
<dbReference type="SUPFAM" id="SSF48295">
    <property type="entry name" value="TrpR-like"/>
    <property type="match status" value="1"/>
</dbReference>
<dbReference type="PROSITE" id="PS01008">
    <property type="entry name" value="DNAA"/>
    <property type="match status" value="1"/>
</dbReference>
<feature type="chain" id="PRO_0000114167" description="Chromosomal replication initiator protein DnaA">
    <location>
        <begin position="1"/>
        <end position="552"/>
    </location>
</feature>
<feature type="region of interest" description="Domain I, interacts with DnaA modulators" evidence="1">
    <location>
        <begin position="1"/>
        <end position="90"/>
    </location>
</feature>
<feature type="region of interest" description="Domain II" evidence="1">
    <location>
        <begin position="90"/>
        <end position="210"/>
    </location>
</feature>
<feature type="region of interest" description="Disordered" evidence="2">
    <location>
        <begin position="113"/>
        <end position="213"/>
    </location>
</feature>
<feature type="region of interest" description="Domain III, AAA+ region" evidence="1">
    <location>
        <begin position="211"/>
        <end position="427"/>
    </location>
</feature>
<feature type="region of interest" description="Domain IV, binds dsDNA" evidence="1">
    <location>
        <begin position="428"/>
        <end position="552"/>
    </location>
</feature>
<feature type="compositionally biased region" description="Low complexity" evidence="2">
    <location>
        <begin position="155"/>
        <end position="170"/>
    </location>
</feature>
<feature type="binding site" evidence="1">
    <location>
        <position position="255"/>
    </location>
    <ligand>
        <name>ATP</name>
        <dbReference type="ChEBI" id="CHEBI:30616"/>
    </ligand>
</feature>
<feature type="binding site" evidence="1">
    <location>
        <position position="257"/>
    </location>
    <ligand>
        <name>ATP</name>
        <dbReference type="ChEBI" id="CHEBI:30616"/>
    </ligand>
</feature>
<feature type="binding site" evidence="1">
    <location>
        <position position="258"/>
    </location>
    <ligand>
        <name>ATP</name>
        <dbReference type="ChEBI" id="CHEBI:30616"/>
    </ligand>
</feature>
<feature type="binding site" evidence="1">
    <location>
        <position position="259"/>
    </location>
    <ligand>
        <name>ATP</name>
        <dbReference type="ChEBI" id="CHEBI:30616"/>
    </ligand>
</feature>
<proteinExistence type="inferred from homology"/>
<organism>
    <name type="scientific">Corynebacterium diphtheriae (strain ATCC 700971 / NCTC 13129 / Biotype gravis)</name>
    <dbReference type="NCBI Taxonomy" id="257309"/>
    <lineage>
        <taxon>Bacteria</taxon>
        <taxon>Bacillati</taxon>
        <taxon>Actinomycetota</taxon>
        <taxon>Actinomycetes</taxon>
        <taxon>Mycobacteriales</taxon>
        <taxon>Corynebacteriaceae</taxon>
        <taxon>Corynebacterium</taxon>
    </lineage>
</organism>
<evidence type="ECO:0000255" key="1">
    <source>
        <dbReference type="HAMAP-Rule" id="MF_00377"/>
    </source>
</evidence>
<evidence type="ECO:0000256" key="2">
    <source>
        <dbReference type="SAM" id="MobiDB-lite"/>
    </source>
</evidence>
<protein>
    <recommendedName>
        <fullName evidence="1">Chromosomal replication initiator protein DnaA</fullName>
    </recommendedName>
</protein>
<keyword id="KW-0067">ATP-binding</keyword>
<keyword id="KW-0963">Cytoplasm</keyword>
<keyword id="KW-0235">DNA replication</keyword>
<keyword id="KW-0238">DNA-binding</keyword>
<keyword id="KW-0446">Lipid-binding</keyword>
<keyword id="KW-0547">Nucleotide-binding</keyword>
<keyword id="KW-1185">Reference proteome</keyword>
<comment type="function">
    <text evidence="1">Plays an essential role in the initiation and regulation of chromosomal replication. ATP-DnaA binds to the origin of replication (oriC) to initiate formation of the DNA replication initiation complex once per cell cycle. Binds the DnaA box (a 9 base pair repeat at the origin) and separates the double-stranded (ds)DNA. Forms a right-handed helical filament on oriC DNA; dsDNA binds to the exterior of the filament while single-stranded (ss)DNA is stabiized in the filament's interior. The ATP-DnaA-oriC complex binds and stabilizes one strand of the AT-rich DNA unwinding element (DUE), permitting loading of DNA polymerase. After initiation quickly degrades to an ADP-DnaA complex that is not apt for DNA replication. Binds acidic phospholipids.</text>
</comment>
<comment type="subunit">
    <text evidence="1">Oligomerizes as a right-handed, spiral filament on DNA at oriC.</text>
</comment>
<comment type="subcellular location">
    <subcellularLocation>
        <location evidence="1">Cytoplasm</location>
    </subcellularLocation>
</comment>
<comment type="domain">
    <text evidence="1">Domain I is involved in oligomerization and binding regulators, domain II is flexibile and of varying length in different bacteria, domain III forms the AAA+ region, while domain IV binds dsDNA.</text>
</comment>
<comment type="similarity">
    <text evidence="1">Belongs to the DnaA family.</text>
</comment>
<accession>Q6NKL7</accession>
<gene>
    <name evidence="1" type="primary">dnaA</name>
    <name type="ordered locus">DIP0001</name>
</gene>